<protein>
    <recommendedName>
        <fullName>Probable tRNA pseudouridine synthase D 1</fullName>
        <ecNumber>5.4.99.27</ecNumber>
    </recommendedName>
    <alternativeName>
        <fullName>tRNA pseudouridine(13) synthase</fullName>
    </alternativeName>
    <alternativeName>
        <fullName>tRNA pseudouridylate synthase D 1</fullName>
    </alternativeName>
    <alternativeName>
        <fullName>tRNA-uridine isomerase D 1</fullName>
    </alternativeName>
</protein>
<reference key="1">
    <citation type="journal article" date="2004" name="J. Bacteriol.">
        <title>Complete genome sequence of the genetically tractable hydrogenotrophic methanogen Methanococcus maripaludis.</title>
        <authorList>
            <person name="Hendrickson E.L."/>
            <person name="Kaul R."/>
            <person name="Zhou Y."/>
            <person name="Bovee D."/>
            <person name="Chapman P."/>
            <person name="Chung J."/>
            <person name="Conway de Macario E."/>
            <person name="Dodsworth J.A."/>
            <person name="Gillett W."/>
            <person name="Graham D.E."/>
            <person name="Hackett M."/>
            <person name="Haydock A.K."/>
            <person name="Kang A."/>
            <person name="Land M.L."/>
            <person name="Levy R."/>
            <person name="Lie T.J."/>
            <person name="Major T.A."/>
            <person name="Moore B.C."/>
            <person name="Porat I."/>
            <person name="Palmeiri A."/>
            <person name="Rouse G."/>
            <person name="Saenphimmachak C."/>
            <person name="Soell D."/>
            <person name="Van Dien S."/>
            <person name="Wang T."/>
            <person name="Whitman W.B."/>
            <person name="Xia Q."/>
            <person name="Zhang Y."/>
            <person name="Larimer F.W."/>
            <person name="Olson M.V."/>
            <person name="Leigh J.A."/>
        </authorList>
    </citation>
    <scope>NUCLEOTIDE SEQUENCE [LARGE SCALE GENOMIC DNA]</scope>
    <source>
        <strain>DSM 14266 / JCM 13030 / NBRC 101832 / S2 / LL</strain>
    </source>
</reference>
<name>TRUD1_METMP</name>
<feature type="chain" id="PRO_0000152544" description="Probable tRNA pseudouridine synthase D 1">
    <location>
        <begin position="1"/>
        <end position="389"/>
    </location>
</feature>
<feature type="domain" description="TRUD" evidence="2">
    <location>
        <begin position="135"/>
        <end position="345"/>
    </location>
</feature>
<feature type="active site" description="Nucleophile" evidence="1">
    <location>
        <position position="63"/>
    </location>
</feature>
<organism>
    <name type="scientific">Methanococcus maripaludis (strain DSM 14266 / JCM 13030 / NBRC 101832 / S2 / LL)</name>
    <dbReference type="NCBI Taxonomy" id="267377"/>
    <lineage>
        <taxon>Archaea</taxon>
        <taxon>Methanobacteriati</taxon>
        <taxon>Methanobacteriota</taxon>
        <taxon>Methanomada group</taxon>
        <taxon>Methanococci</taxon>
        <taxon>Methanococcales</taxon>
        <taxon>Methanococcaceae</taxon>
        <taxon>Methanococcus</taxon>
    </lineage>
</organism>
<gene>
    <name type="primary">truD1</name>
    <name type="ordered locus">MMP0014</name>
</gene>
<evidence type="ECO:0000250" key="1"/>
<evidence type="ECO:0000255" key="2">
    <source>
        <dbReference type="PROSITE-ProRule" id="PRU00342"/>
    </source>
</evidence>
<evidence type="ECO:0000305" key="3"/>
<sequence>MKFRQKHEDFIVNEILEYELNDYGNYFLYKLQKNGIENLKAISYLSKNFEVPTKEIGYCGLKDRHAITTQYVSIPKEYGKLSLDEDNLKLEYVGTIEKPLKIGRLYGNRFEIIARAVDKDEFLKIADNIRNLSSGAPNYYDDQRFGSVFNGKFIAKEILKGNYEEVVKILLTSYTKSEKKQLKDLKRFIAKNWGNWDECLEYIDKKQIRSKMFRNMVKSLTYENDFKKAFKYVDNRLKELFISAYQSYLWNECLKEFLKEVIPKENRIYVDYSCGTFLFYENIEEELFDKLKEMDFPTIVSDVEYTDPEKRIIKAILKKERIKISDFEKLDFGKLKYTKRPIISIPEDVNTGKFKSDELNSKKYKIDLEFSLKKGSYATIILKRVFNIL</sequence>
<keyword id="KW-0413">Isomerase</keyword>
<keyword id="KW-1185">Reference proteome</keyword>
<keyword id="KW-0819">tRNA processing</keyword>
<comment type="function">
    <text evidence="1">Could be responsible for synthesis of pseudouridine from uracil-13 in transfer RNAs.</text>
</comment>
<comment type="catalytic activity">
    <reaction>
        <text>uridine(13) in tRNA = pseudouridine(13) in tRNA</text>
        <dbReference type="Rhea" id="RHEA:42540"/>
        <dbReference type="Rhea" id="RHEA-COMP:10105"/>
        <dbReference type="Rhea" id="RHEA-COMP:10106"/>
        <dbReference type="ChEBI" id="CHEBI:65314"/>
        <dbReference type="ChEBI" id="CHEBI:65315"/>
        <dbReference type="EC" id="5.4.99.27"/>
    </reaction>
</comment>
<comment type="similarity">
    <text evidence="3">Belongs to the pseudouridine synthase TruD family.</text>
</comment>
<accession>Q6M1A3</accession>
<proteinExistence type="inferred from homology"/>
<dbReference type="EC" id="5.4.99.27"/>
<dbReference type="EMBL" id="BX950229">
    <property type="protein sequence ID" value="CAF29570.1"/>
    <property type="molecule type" value="Genomic_DNA"/>
</dbReference>
<dbReference type="RefSeq" id="WP_011169958.1">
    <property type="nucleotide sequence ID" value="NC_005791.1"/>
</dbReference>
<dbReference type="SMR" id="Q6M1A3"/>
<dbReference type="STRING" id="267377.MMP0014"/>
<dbReference type="EnsemblBacteria" id="CAF29570">
    <property type="protein sequence ID" value="CAF29570"/>
    <property type="gene ID" value="MMP0014"/>
</dbReference>
<dbReference type="GeneID" id="2762446"/>
<dbReference type="KEGG" id="mmp:MMP0014"/>
<dbReference type="PATRIC" id="fig|267377.15.peg.14"/>
<dbReference type="eggNOG" id="arCOG04252">
    <property type="taxonomic scope" value="Archaea"/>
</dbReference>
<dbReference type="HOGENOM" id="CLU_005281_4_1_2"/>
<dbReference type="OrthoDB" id="1798at2157"/>
<dbReference type="Proteomes" id="UP000000590">
    <property type="component" value="Chromosome"/>
</dbReference>
<dbReference type="GO" id="GO:0003723">
    <property type="term" value="F:RNA binding"/>
    <property type="evidence" value="ECO:0007669"/>
    <property type="project" value="InterPro"/>
</dbReference>
<dbReference type="GO" id="GO:0160150">
    <property type="term" value="F:tRNA pseudouridine(13) synthase activity"/>
    <property type="evidence" value="ECO:0007669"/>
    <property type="project" value="UniProtKB-EC"/>
</dbReference>
<dbReference type="GO" id="GO:0001522">
    <property type="term" value="P:pseudouridine synthesis"/>
    <property type="evidence" value="ECO:0007669"/>
    <property type="project" value="InterPro"/>
</dbReference>
<dbReference type="GO" id="GO:0008033">
    <property type="term" value="P:tRNA processing"/>
    <property type="evidence" value="ECO:0007669"/>
    <property type="project" value="UniProtKB-KW"/>
</dbReference>
<dbReference type="FunFam" id="3.30.70.3160:FF:000001">
    <property type="entry name" value="Probable tRNA pseudouridine synthase D"/>
    <property type="match status" value="1"/>
</dbReference>
<dbReference type="Gene3D" id="1.10.1510.30">
    <property type="match status" value="1"/>
</dbReference>
<dbReference type="Gene3D" id="3.30.70.3160">
    <property type="match status" value="1"/>
</dbReference>
<dbReference type="Gene3D" id="3.30.2350.20">
    <property type="entry name" value="TruD, catalytic domain"/>
    <property type="match status" value="1"/>
</dbReference>
<dbReference type="InterPro" id="IPR020103">
    <property type="entry name" value="PsdUridine_synth_cat_dom_sf"/>
</dbReference>
<dbReference type="InterPro" id="IPR001656">
    <property type="entry name" value="PsdUridine_synth_TruD"/>
</dbReference>
<dbReference type="InterPro" id="IPR020119">
    <property type="entry name" value="PsdUridine_synth_TruD_CS"/>
</dbReference>
<dbReference type="InterPro" id="IPR011760">
    <property type="entry name" value="PsdUridine_synth_TruD_insert"/>
</dbReference>
<dbReference type="InterPro" id="IPR042214">
    <property type="entry name" value="TruD_catalytic"/>
</dbReference>
<dbReference type="NCBIfam" id="NF002156">
    <property type="entry name" value="PRK00984.2-1"/>
    <property type="match status" value="1"/>
</dbReference>
<dbReference type="NCBIfam" id="NF002160">
    <property type="entry name" value="PRK00984.2-5"/>
    <property type="match status" value="1"/>
</dbReference>
<dbReference type="NCBIfam" id="TIGR00094">
    <property type="entry name" value="tRNA_TruD_broad"/>
    <property type="match status" value="1"/>
</dbReference>
<dbReference type="PANTHER" id="PTHR13326:SF21">
    <property type="entry name" value="PSEUDOURIDYLATE SYNTHASE PUS7L"/>
    <property type="match status" value="1"/>
</dbReference>
<dbReference type="PANTHER" id="PTHR13326">
    <property type="entry name" value="TRNA PSEUDOURIDINE SYNTHASE D"/>
    <property type="match status" value="1"/>
</dbReference>
<dbReference type="Pfam" id="PF01142">
    <property type="entry name" value="TruD"/>
    <property type="match status" value="1"/>
</dbReference>
<dbReference type="PIRSF" id="PIRSF037016">
    <property type="entry name" value="Pseudouridin_synth_euk_prd"/>
    <property type="match status" value="1"/>
</dbReference>
<dbReference type="SUPFAM" id="SSF55120">
    <property type="entry name" value="Pseudouridine synthase"/>
    <property type="match status" value="1"/>
</dbReference>
<dbReference type="PROSITE" id="PS50984">
    <property type="entry name" value="TRUD"/>
    <property type="match status" value="1"/>
</dbReference>
<dbReference type="PROSITE" id="PS01268">
    <property type="entry name" value="UPF0024"/>
    <property type="match status" value="1"/>
</dbReference>